<protein>
    <recommendedName>
        <fullName evidence="1">Xanthine-guanine phosphoribosyltransferase</fullName>
        <shortName evidence="1">XGPRT</shortName>
        <ecNumber evidence="1">2.4.2.-</ecNumber>
        <ecNumber evidence="1">2.4.2.22</ecNumber>
    </recommendedName>
    <alternativeName>
        <fullName evidence="1">Xanthine phosphoribosyltransferase</fullName>
    </alternativeName>
</protein>
<name>XGPT_PHOPR</name>
<reference key="1">
    <citation type="journal article" date="2005" name="Science">
        <title>Life at depth: Photobacterium profundum genome sequence and expression analysis.</title>
        <authorList>
            <person name="Vezzi A."/>
            <person name="Campanaro S."/>
            <person name="D'Angelo M."/>
            <person name="Simonato F."/>
            <person name="Vitulo N."/>
            <person name="Lauro F.M."/>
            <person name="Cestaro A."/>
            <person name="Malacrida G."/>
            <person name="Simionati B."/>
            <person name="Cannata N."/>
            <person name="Romualdi C."/>
            <person name="Bartlett D.H."/>
            <person name="Valle G."/>
        </authorList>
    </citation>
    <scope>NUCLEOTIDE SEQUENCE [LARGE SCALE GENOMIC DNA]</scope>
    <source>
        <strain>ATCC BAA-1253 / SS9</strain>
    </source>
</reference>
<comment type="function">
    <text evidence="1">Purine salvage pathway enzyme that catalyzes the transfer of the ribosyl-5-phosphate group from 5-phospho-alpha-D-ribose 1-diphosphate (PRPP) to the N9 position of the 6-oxopurines guanine and xanthine to form the corresponding ribonucleotides GMP (guanosine 5'-monophosphate) and XMP (xanthosine 5'-monophosphate), with the release of PPi. To a lesser extent, also acts on hypoxanthine.</text>
</comment>
<comment type="catalytic activity">
    <reaction evidence="1">
        <text>GMP + diphosphate = guanine + 5-phospho-alpha-D-ribose 1-diphosphate</text>
        <dbReference type="Rhea" id="RHEA:25424"/>
        <dbReference type="ChEBI" id="CHEBI:16235"/>
        <dbReference type="ChEBI" id="CHEBI:33019"/>
        <dbReference type="ChEBI" id="CHEBI:58017"/>
        <dbReference type="ChEBI" id="CHEBI:58115"/>
    </reaction>
    <physiologicalReaction direction="right-to-left" evidence="1">
        <dbReference type="Rhea" id="RHEA:25426"/>
    </physiologicalReaction>
</comment>
<comment type="catalytic activity">
    <reaction evidence="1">
        <text>XMP + diphosphate = xanthine + 5-phospho-alpha-D-ribose 1-diphosphate</text>
        <dbReference type="Rhea" id="RHEA:10800"/>
        <dbReference type="ChEBI" id="CHEBI:17712"/>
        <dbReference type="ChEBI" id="CHEBI:33019"/>
        <dbReference type="ChEBI" id="CHEBI:57464"/>
        <dbReference type="ChEBI" id="CHEBI:58017"/>
        <dbReference type="EC" id="2.4.2.22"/>
    </reaction>
    <physiologicalReaction direction="right-to-left" evidence="1">
        <dbReference type="Rhea" id="RHEA:10802"/>
    </physiologicalReaction>
</comment>
<comment type="catalytic activity">
    <reaction evidence="1">
        <text>IMP + diphosphate = hypoxanthine + 5-phospho-alpha-D-ribose 1-diphosphate</text>
        <dbReference type="Rhea" id="RHEA:17973"/>
        <dbReference type="ChEBI" id="CHEBI:17368"/>
        <dbReference type="ChEBI" id="CHEBI:33019"/>
        <dbReference type="ChEBI" id="CHEBI:58017"/>
        <dbReference type="ChEBI" id="CHEBI:58053"/>
    </reaction>
    <physiologicalReaction direction="right-to-left" evidence="1">
        <dbReference type="Rhea" id="RHEA:17975"/>
    </physiologicalReaction>
</comment>
<comment type="cofactor">
    <cofactor evidence="1">
        <name>Mg(2+)</name>
        <dbReference type="ChEBI" id="CHEBI:18420"/>
    </cofactor>
</comment>
<comment type="pathway">
    <text evidence="1">Purine metabolism; GMP biosynthesis via salvage pathway; GMP from guanine: step 1/1.</text>
</comment>
<comment type="pathway">
    <text evidence="1">Purine metabolism; XMP biosynthesis via salvage pathway; XMP from xanthine: step 1/1.</text>
</comment>
<comment type="subunit">
    <text evidence="1">Homotetramer.</text>
</comment>
<comment type="subcellular location">
    <subcellularLocation>
        <location evidence="1">Cell inner membrane</location>
        <topology evidence="1">Peripheral membrane protein</topology>
    </subcellularLocation>
</comment>
<comment type="similarity">
    <text evidence="1">Belongs to the purine/pyrimidine phosphoribosyltransferase family. XGPT subfamily.</text>
</comment>
<gene>
    <name evidence="1" type="primary">gpt</name>
    <name type="ordered locus">PBPRA0836</name>
</gene>
<proteinExistence type="inferred from homology"/>
<sequence length="152" mass="17109">MSNKFVITWDNMQMYTRQLAEKLLPADQWKGIIAVSRGGLVPAAILARELNIRHVDTVCISSYDHDHQREMKVLKQADGDGEGFIVIDDLVDTGGTAELIRAMYPKAKFVTVCAKPAGKHFIDDYVVDIAQDTWIEQPWDMAVTFVDPISKK</sequence>
<keyword id="KW-0997">Cell inner membrane</keyword>
<keyword id="KW-1003">Cell membrane</keyword>
<keyword id="KW-0328">Glycosyltransferase</keyword>
<keyword id="KW-0460">Magnesium</keyword>
<keyword id="KW-0472">Membrane</keyword>
<keyword id="KW-0479">Metal-binding</keyword>
<keyword id="KW-0660">Purine salvage</keyword>
<keyword id="KW-1185">Reference proteome</keyword>
<keyword id="KW-0808">Transferase</keyword>
<feature type="chain" id="PRO_0000139678" description="Xanthine-guanine phosphoribosyltransferase">
    <location>
        <begin position="1"/>
        <end position="152"/>
    </location>
</feature>
<feature type="binding site" evidence="1">
    <location>
        <begin position="37"/>
        <end position="38"/>
    </location>
    <ligand>
        <name>5-phospho-alpha-D-ribose 1-diphosphate</name>
        <dbReference type="ChEBI" id="CHEBI:58017"/>
    </ligand>
</feature>
<feature type="binding site" evidence="1">
    <location>
        <position position="69"/>
    </location>
    <ligand>
        <name>5-phospho-alpha-D-ribose 1-diphosphate</name>
        <dbReference type="ChEBI" id="CHEBI:58017"/>
    </ligand>
</feature>
<feature type="binding site" evidence="1">
    <location>
        <position position="69"/>
    </location>
    <ligand>
        <name>GMP</name>
        <dbReference type="ChEBI" id="CHEBI:58115"/>
    </ligand>
</feature>
<feature type="binding site" evidence="1">
    <location>
        <begin position="88"/>
        <end position="96"/>
    </location>
    <ligand>
        <name>5-phospho-alpha-D-ribose 1-diphosphate</name>
        <dbReference type="ChEBI" id="CHEBI:58017"/>
    </ligand>
</feature>
<feature type="binding site" evidence="1">
    <location>
        <position position="89"/>
    </location>
    <ligand>
        <name>Mg(2+)</name>
        <dbReference type="ChEBI" id="CHEBI:18420"/>
    </ligand>
</feature>
<feature type="binding site" evidence="1">
    <location>
        <begin position="92"/>
        <end position="96"/>
    </location>
    <ligand>
        <name>GMP</name>
        <dbReference type="ChEBI" id="CHEBI:58115"/>
    </ligand>
</feature>
<feature type="binding site" evidence="1">
    <location>
        <position position="92"/>
    </location>
    <ligand>
        <name>guanine</name>
        <dbReference type="ChEBI" id="CHEBI:16235"/>
    </ligand>
</feature>
<feature type="binding site" evidence="1">
    <location>
        <position position="92"/>
    </location>
    <ligand>
        <name>xanthine</name>
        <dbReference type="ChEBI" id="CHEBI:17712"/>
    </ligand>
</feature>
<feature type="binding site" evidence="1">
    <location>
        <begin position="134"/>
        <end position="135"/>
    </location>
    <ligand>
        <name>GMP</name>
        <dbReference type="ChEBI" id="CHEBI:58115"/>
    </ligand>
</feature>
<feature type="binding site" evidence="1">
    <location>
        <position position="135"/>
    </location>
    <ligand>
        <name>guanine</name>
        <dbReference type="ChEBI" id="CHEBI:16235"/>
    </ligand>
</feature>
<feature type="binding site" evidence="1">
    <location>
        <position position="135"/>
    </location>
    <ligand>
        <name>xanthine</name>
        <dbReference type="ChEBI" id="CHEBI:17712"/>
    </ligand>
</feature>
<organism>
    <name type="scientific">Photobacterium profundum (strain SS9)</name>
    <dbReference type="NCBI Taxonomy" id="298386"/>
    <lineage>
        <taxon>Bacteria</taxon>
        <taxon>Pseudomonadati</taxon>
        <taxon>Pseudomonadota</taxon>
        <taxon>Gammaproteobacteria</taxon>
        <taxon>Vibrionales</taxon>
        <taxon>Vibrionaceae</taxon>
        <taxon>Photobacterium</taxon>
    </lineage>
</organism>
<accession>Q6LTX6</accession>
<dbReference type="EC" id="2.4.2.-" evidence="1"/>
<dbReference type="EC" id="2.4.2.22" evidence="1"/>
<dbReference type="EMBL" id="CR378665">
    <property type="protein sequence ID" value="CAG19249.1"/>
    <property type="molecule type" value="Genomic_DNA"/>
</dbReference>
<dbReference type="RefSeq" id="WP_011217586.1">
    <property type="nucleotide sequence ID" value="NC_006370.1"/>
</dbReference>
<dbReference type="SMR" id="Q6LTX6"/>
<dbReference type="STRING" id="298386.PBPRA0836"/>
<dbReference type="KEGG" id="ppr:PBPRA0836"/>
<dbReference type="eggNOG" id="COG2236">
    <property type="taxonomic scope" value="Bacteria"/>
</dbReference>
<dbReference type="HOGENOM" id="CLU_080904_3_0_6"/>
<dbReference type="UniPathway" id="UPA00602">
    <property type="reaction ID" value="UER00658"/>
</dbReference>
<dbReference type="UniPathway" id="UPA00909">
    <property type="reaction ID" value="UER00887"/>
</dbReference>
<dbReference type="Proteomes" id="UP000000593">
    <property type="component" value="Chromosome 1"/>
</dbReference>
<dbReference type="GO" id="GO:0005829">
    <property type="term" value="C:cytosol"/>
    <property type="evidence" value="ECO:0007669"/>
    <property type="project" value="TreeGrafter"/>
</dbReference>
<dbReference type="GO" id="GO:0005886">
    <property type="term" value="C:plasma membrane"/>
    <property type="evidence" value="ECO:0007669"/>
    <property type="project" value="UniProtKB-SubCell"/>
</dbReference>
<dbReference type="GO" id="GO:0052657">
    <property type="term" value="F:guanine phosphoribosyltransferase activity"/>
    <property type="evidence" value="ECO:0007669"/>
    <property type="project" value="RHEA"/>
</dbReference>
<dbReference type="GO" id="GO:0004422">
    <property type="term" value="F:hypoxanthine phosphoribosyltransferase activity"/>
    <property type="evidence" value="ECO:0007669"/>
    <property type="project" value="TreeGrafter"/>
</dbReference>
<dbReference type="GO" id="GO:0000287">
    <property type="term" value="F:magnesium ion binding"/>
    <property type="evidence" value="ECO:0007669"/>
    <property type="project" value="UniProtKB-UniRule"/>
</dbReference>
<dbReference type="GO" id="GO:0000310">
    <property type="term" value="F:xanthine phosphoribosyltransferase activity"/>
    <property type="evidence" value="ECO:0007669"/>
    <property type="project" value="UniProtKB-UniRule"/>
</dbReference>
<dbReference type="GO" id="GO:0032263">
    <property type="term" value="P:GMP salvage"/>
    <property type="evidence" value="ECO:0007669"/>
    <property type="project" value="UniProtKB-UniRule"/>
</dbReference>
<dbReference type="GO" id="GO:0032264">
    <property type="term" value="P:IMP salvage"/>
    <property type="evidence" value="ECO:0007669"/>
    <property type="project" value="TreeGrafter"/>
</dbReference>
<dbReference type="GO" id="GO:0006166">
    <property type="term" value="P:purine ribonucleoside salvage"/>
    <property type="evidence" value="ECO:0007669"/>
    <property type="project" value="UniProtKB-KW"/>
</dbReference>
<dbReference type="GO" id="GO:0032265">
    <property type="term" value="P:XMP salvage"/>
    <property type="evidence" value="ECO:0007669"/>
    <property type="project" value="UniProtKB-UniRule"/>
</dbReference>
<dbReference type="CDD" id="cd06223">
    <property type="entry name" value="PRTases_typeI"/>
    <property type="match status" value="1"/>
</dbReference>
<dbReference type="FunFam" id="3.40.50.2020:FF:000009">
    <property type="entry name" value="Xanthine phosphoribosyltransferase"/>
    <property type="match status" value="1"/>
</dbReference>
<dbReference type="Gene3D" id="3.40.50.2020">
    <property type="match status" value="1"/>
</dbReference>
<dbReference type="HAMAP" id="MF_01903">
    <property type="entry name" value="XGPRT"/>
    <property type="match status" value="1"/>
</dbReference>
<dbReference type="InterPro" id="IPR000836">
    <property type="entry name" value="PRibTrfase_dom"/>
</dbReference>
<dbReference type="InterPro" id="IPR029057">
    <property type="entry name" value="PRTase-like"/>
</dbReference>
<dbReference type="InterPro" id="IPR023747">
    <property type="entry name" value="Xanthine_Guanine_PRibTrfase"/>
</dbReference>
<dbReference type="NCBIfam" id="NF006613">
    <property type="entry name" value="PRK09177.1"/>
    <property type="match status" value="1"/>
</dbReference>
<dbReference type="PANTHER" id="PTHR39563">
    <property type="entry name" value="XANTHINE PHOSPHORIBOSYLTRANSFERASE"/>
    <property type="match status" value="1"/>
</dbReference>
<dbReference type="PANTHER" id="PTHR39563:SF1">
    <property type="entry name" value="XANTHINE-GUANINE PHOSPHORIBOSYLTRANSFERASE"/>
    <property type="match status" value="1"/>
</dbReference>
<dbReference type="Pfam" id="PF00156">
    <property type="entry name" value="Pribosyltran"/>
    <property type="match status" value="1"/>
</dbReference>
<dbReference type="SUPFAM" id="SSF53271">
    <property type="entry name" value="PRTase-like"/>
    <property type="match status" value="1"/>
</dbReference>
<dbReference type="PROSITE" id="PS00103">
    <property type="entry name" value="PUR_PYR_PR_TRANSFER"/>
    <property type="match status" value="1"/>
</dbReference>
<evidence type="ECO:0000255" key="1">
    <source>
        <dbReference type="HAMAP-Rule" id="MF_01903"/>
    </source>
</evidence>